<organism>
    <name type="scientific">Homo sapiens</name>
    <name type="common">Human</name>
    <dbReference type="NCBI Taxonomy" id="9606"/>
    <lineage>
        <taxon>Eukaryota</taxon>
        <taxon>Metazoa</taxon>
        <taxon>Chordata</taxon>
        <taxon>Craniata</taxon>
        <taxon>Vertebrata</taxon>
        <taxon>Euteleostomi</taxon>
        <taxon>Mammalia</taxon>
        <taxon>Eutheria</taxon>
        <taxon>Euarchontoglires</taxon>
        <taxon>Primates</taxon>
        <taxon>Haplorrhini</taxon>
        <taxon>Catarrhini</taxon>
        <taxon>Hominidae</taxon>
        <taxon>Homo</taxon>
    </lineage>
</organism>
<gene>
    <name type="primary">SLU7</name>
</gene>
<accession>O95391</accession>
<accession>D3DQK2</accession>
<accession>Q3LUJ0</accession>
<accession>Q3LUJ1</accession>
<accession>Q6RXQ5</accession>
<accession>Q96FM9</accession>
<dbReference type="EMBL" id="AF101074">
    <property type="protein sequence ID" value="AAD13774.1"/>
    <property type="molecule type" value="mRNA"/>
</dbReference>
<dbReference type="EMBL" id="AC091842">
    <property type="status" value="NOT_ANNOTATED_CDS"/>
    <property type="molecule type" value="Genomic_DNA"/>
</dbReference>
<dbReference type="EMBL" id="CH471062">
    <property type="protein sequence ID" value="EAW61554.1"/>
    <property type="molecule type" value="Genomic_DNA"/>
</dbReference>
<dbReference type="EMBL" id="CH471062">
    <property type="protein sequence ID" value="EAW61555.1"/>
    <property type="molecule type" value="Genomic_DNA"/>
</dbReference>
<dbReference type="EMBL" id="BC010634">
    <property type="protein sequence ID" value="AAH10634.1"/>
    <property type="molecule type" value="mRNA"/>
</dbReference>
<dbReference type="EMBL" id="AY486334">
    <property type="protein sequence ID" value="AAS59410.1"/>
    <property type="molecule type" value="mRNA"/>
</dbReference>
<dbReference type="EMBL" id="DQ174516">
    <property type="protein sequence ID" value="ABA08382.1"/>
    <property type="molecule type" value="mRNA"/>
</dbReference>
<dbReference type="EMBL" id="DQ174517">
    <property type="protein sequence ID" value="ABA08383.1"/>
    <property type="molecule type" value="mRNA"/>
</dbReference>
<dbReference type="CCDS" id="CCDS4352.1"/>
<dbReference type="RefSeq" id="NP_001351447.1">
    <property type="nucleotide sequence ID" value="NM_001364518.2"/>
</dbReference>
<dbReference type="RefSeq" id="NP_001351449.1">
    <property type="nucleotide sequence ID" value="NM_001364520.2"/>
</dbReference>
<dbReference type="RefSeq" id="NP_001351450.1">
    <property type="nucleotide sequence ID" value="NM_001364521.2"/>
</dbReference>
<dbReference type="RefSeq" id="NP_006416.3">
    <property type="nucleotide sequence ID" value="NM_006425.4"/>
</dbReference>
<dbReference type="RefSeq" id="XP_011532720.1">
    <property type="nucleotide sequence ID" value="XM_011534418.2"/>
</dbReference>
<dbReference type="RefSeq" id="XP_024310095.1">
    <property type="nucleotide sequence ID" value="XM_024454327.2"/>
</dbReference>
<dbReference type="PDB" id="5XJC">
    <property type="method" value="EM"/>
    <property type="resolution" value="3.60 A"/>
    <property type="chains" value="Z=1-586"/>
</dbReference>
<dbReference type="PDB" id="6ICZ">
    <property type="method" value="EM"/>
    <property type="resolution" value="3.00 A"/>
    <property type="chains" value="Z=1-586"/>
</dbReference>
<dbReference type="PDB" id="6QDV">
    <property type="method" value="EM"/>
    <property type="resolution" value="3.30 A"/>
    <property type="chains" value="c=1-586"/>
</dbReference>
<dbReference type="PDB" id="7W5A">
    <property type="method" value="EM"/>
    <property type="resolution" value="3.60 A"/>
    <property type="chains" value="1=1-586"/>
</dbReference>
<dbReference type="PDB" id="7W5B">
    <property type="method" value="EM"/>
    <property type="resolution" value="4.30 A"/>
    <property type="chains" value="1=1-586"/>
</dbReference>
<dbReference type="PDB" id="8C6J">
    <property type="method" value="EM"/>
    <property type="resolution" value="2.80 A"/>
    <property type="chains" value="h=1-586"/>
</dbReference>
<dbReference type="PDB" id="9FMD">
    <property type="method" value="EM"/>
    <property type="resolution" value="3.30 A"/>
    <property type="chains" value="U=1-586"/>
</dbReference>
<dbReference type="PDBsum" id="5XJC"/>
<dbReference type="PDBsum" id="6ICZ"/>
<dbReference type="PDBsum" id="6QDV"/>
<dbReference type="PDBsum" id="7W5A"/>
<dbReference type="PDBsum" id="7W5B"/>
<dbReference type="PDBsum" id="8C6J"/>
<dbReference type="PDBsum" id="9FMD"/>
<dbReference type="EMDB" id="EMD-16452"/>
<dbReference type="EMDB" id="EMD-32319"/>
<dbReference type="EMDB" id="EMD-32321"/>
<dbReference type="EMDB" id="EMD-4525"/>
<dbReference type="EMDB" id="EMD-6721"/>
<dbReference type="EMDB" id="EMD-9645"/>
<dbReference type="SMR" id="O95391"/>
<dbReference type="BioGRID" id="115820">
    <property type="interactions" value="150"/>
</dbReference>
<dbReference type="CORUM" id="O95391"/>
<dbReference type="FunCoup" id="O95391">
    <property type="interactions" value="4710"/>
</dbReference>
<dbReference type="IntAct" id="O95391">
    <property type="interactions" value="105"/>
</dbReference>
<dbReference type="MINT" id="O95391"/>
<dbReference type="STRING" id="9606.ENSP00000297151"/>
<dbReference type="GlyGen" id="O95391">
    <property type="glycosylation" value="1 site, 1 O-linked glycan (1 site)"/>
</dbReference>
<dbReference type="iPTMnet" id="O95391"/>
<dbReference type="PhosphoSitePlus" id="O95391"/>
<dbReference type="SwissPalm" id="O95391"/>
<dbReference type="BioMuta" id="SLU7"/>
<dbReference type="jPOST" id="O95391"/>
<dbReference type="MassIVE" id="O95391"/>
<dbReference type="PaxDb" id="9606-ENSP00000297151"/>
<dbReference type="PeptideAtlas" id="O95391"/>
<dbReference type="ProteomicsDB" id="50843"/>
<dbReference type="Pumba" id="O95391"/>
<dbReference type="Antibodypedia" id="28531">
    <property type="antibodies" value="345 antibodies from 30 providers"/>
</dbReference>
<dbReference type="DNASU" id="10569"/>
<dbReference type="Ensembl" id="ENST00000297151.9">
    <property type="protein sequence ID" value="ENSP00000297151.4"/>
    <property type="gene ID" value="ENSG00000164609.10"/>
</dbReference>
<dbReference type="GeneID" id="10569"/>
<dbReference type="KEGG" id="hsa:10569"/>
<dbReference type="MANE-Select" id="ENST00000297151.9">
    <property type="protein sequence ID" value="ENSP00000297151.4"/>
    <property type="RefSeq nucleotide sequence ID" value="NM_006425.5"/>
    <property type="RefSeq protein sequence ID" value="NP_006416.3"/>
</dbReference>
<dbReference type="UCSC" id="uc003lyg.4">
    <property type="organism name" value="human"/>
</dbReference>
<dbReference type="AGR" id="HGNC:16939"/>
<dbReference type="CTD" id="10569"/>
<dbReference type="DisGeNET" id="10569"/>
<dbReference type="GeneCards" id="SLU7"/>
<dbReference type="HGNC" id="HGNC:16939">
    <property type="gene designation" value="SLU7"/>
</dbReference>
<dbReference type="HPA" id="ENSG00000164609">
    <property type="expression patterns" value="Low tissue specificity"/>
</dbReference>
<dbReference type="MIM" id="605974">
    <property type="type" value="gene"/>
</dbReference>
<dbReference type="neXtProt" id="NX_O95391"/>
<dbReference type="OpenTargets" id="ENSG00000164609"/>
<dbReference type="PharmGKB" id="PA128394574"/>
<dbReference type="VEuPathDB" id="HostDB:ENSG00000164609"/>
<dbReference type="eggNOG" id="KOG2560">
    <property type="taxonomic scope" value="Eukaryota"/>
</dbReference>
<dbReference type="GeneTree" id="ENSGT00390000002292"/>
<dbReference type="HOGENOM" id="CLU_019317_2_0_1"/>
<dbReference type="InParanoid" id="O95391"/>
<dbReference type="OMA" id="KYAWESQ"/>
<dbReference type="OrthoDB" id="249612at2759"/>
<dbReference type="PAN-GO" id="O95391">
    <property type="GO annotations" value="2 GO annotations based on evolutionary models"/>
</dbReference>
<dbReference type="PhylomeDB" id="O95391"/>
<dbReference type="TreeFam" id="TF105691"/>
<dbReference type="PathwayCommons" id="O95391"/>
<dbReference type="Reactome" id="R-HSA-159236">
    <property type="pathway name" value="Transport of Mature mRNA derived from an Intron-Containing Transcript"/>
</dbReference>
<dbReference type="Reactome" id="R-HSA-72163">
    <property type="pathway name" value="mRNA Splicing - Major Pathway"/>
</dbReference>
<dbReference type="Reactome" id="R-HSA-72187">
    <property type="pathway name" value="mRNA 3'-end processing"/>
</dbReference>
<dbReference type="Reactome" id="R-HSA-73856">
    <property type="pathway name" value="RNA Polymerase II Transcription Termination"/>
</dbReference>
<dbReference type="SignaLink" id="O95391"/>
<dbReference type="BioGRID-ORCS" id="10569">
    <property type="hits" value="774 hits in 1161 CRISPR screens"/>
</dbReference>
<dbReference type="ChiTaRS" id="SLU7">
    <property type="organism name" value="human"/>
</dbReference>
<dbReference type="GeneWiki" id="SLU7"/>
<dbReference type="GenomeRNAi" id="10569"/>
<dbReference type="Pharos" id="O95391">
    <property type="development level" value="Tbio"/>
</dbReference>
<dbReference type="PRO" id="PR:O95391"/>
<dbReference type="Proteomes" id="UP000005640">
    <property type="component" value="Chromosome 5"/>
</dbReference>
<dbReference type="RNAct" id="O95391">
    <property type="molecule type" value="protein"/>
</dbReference>
<dbReference type="Bgee" id="ENSG00000164609">
    <property type="expression patterns" value="Expressed in epithelial cell of pancreas and 191 other cell types or tissues"/>
</dbReference>
<dbReference type="ExpressionAtlas" id="O95391">
    <property type="expression patterns" value="baseline and differential"/>
</dbReference>
<dbReference type="GO" id="GO:0071013">
    <property type="term" value="C:catalytic step 2 spliceosome"/>
    <property type="evidence" value="ECO:0000314"/>
    <property type="project" value="UniProtKB"/>
</dbReference>
<dbReference type="GO" id="GO:0005737">
    <property type="term" value="C:cytoplasm"/>
    <property type="evidence" value="ECO:0000314"/>
    <property type="project" value="UniProtKB"/>
</dbReference>
<dbReference type="GO" id="GO:0005829">
    <property type="term" value="C:cytosol"/>
    <property type="evidence" value="ECO:0000314"/>
    <property type="project" value="HPA"/>
</dbReference>
<dbReference type="GO" id="GO:0043231">
    <property type="term" value="C:intracellular membrane-bounded organelle"/>
    <property type="evidence" value="ECO:0000314"/>
    <property type="project" value="HPA"/>
</dbReference>
<dbReference type="GO" id="GO:0016020">
    <property type="term" value="C:membrane"/>
    <property type="evidence" value="ECO:0007005"/>
    <property type="project" value="UniProtKB"/>
</dbReference>
<dbReference type="GO" id="GO:0016607">
    <property type="term" value="C:nuclear speck"/>
    <property type="evidence" value="ECO:0000314"/>
    <property type="project" value="HGNC-UCL"/>
</dbReference>
<dbReference type="GO" id="GO:0005654">
    <property type="term" value="C:nucleoplasm"/>
    <property type="evidence" value="ECO:0000314"/>
    <property type="project" value="HPA"/>
</dbReference>
<dbReference type="GO" id="GO:0005634">
    <property type="term" value="C:nucleus"/>
    <property type="evidence" value="ECO:0000314"/>
    <property type="project" value="UniProtKB"/>
</dbReference>
<dbReference type="GO" id="GO:0030532">
    <property type="term" value="C:small nuclear ribonucleoprotein complex"/>
    <property type="evidence" value="ECO:0000314"/>
    <property type="project" value="HGNC-UCL"/>
</dbReference>
<dbReference type="GO" id="GO:0005681">
    <property type="term" value="C:spliceosomal complex"/>
    <property type="evidence" value="ECO:0000314"/>
    <property type="project" value="HGNC-UCL"/>
</dbReference>
<dbReference type="GO" id="GO:0030628">
    <property type="term" value="F:pre-mRNA 3'-splice site binding"/>
    <property type="evidence" value="ECO:0000314"/>
    <property type="project" value="HGNC-UCL"/>
</dbReference>
<dbReference type="GO" id="GO:0000386">
    <property type="term" value="F:second spliceosomal transesterification activity"/>
    <property type="evidence" value="ECO:0000314"/>
    <property type="project" value="HGNC-UCL"/>
</dbReference>
<dbReference type="GO" id="GO:0008270">
    <property type="term" value="F:zinc ion binding"/>
    <property type="evidence" value="ECO:0000314"/>
    <property type="project" value="HGNC-UCL"/>
</dbReference>
<dbReference type="GO" id="GO:0000380">
    <property type="term" value="P:alternative mRNA splicing, via spliceosome"/>
    <property type="evidence" value="ECO:0000314"/>
    <property type="project" value="HGNC-UCL"/>
</dbReference>
<dbReference type="GO" id="GO:0034605">
    <property type="term" value="P:cellular response to heat"/>
    <property type="evidence" value="ECO:0000314"/>
    <property type="project" value="UniProtKB"/>
</dbReference>
<dbReference type="GO" id="GO:0006886">
    <property type="term" value="P:intracellular protein transport"/>
    <property type="evidence" value="ECO:0000314"/>
    <property type="project" value="UniProtKB"/>
</dbReference>
<dbReference type="GO" id="GO:0000389">
    <property type="term" value="P:mRNA 3'-splice site recognition"/>
    <property type="evidence" value="ECO:0000314"/>
    <property type="project" value="HGNC-UCL"/>
</dbReference>
<dbReference type="GO" id="GO:0000398">
    <property type="term" value="P:mRNA splicing, via spliceosome"/>
    <property type="evidence" value="ECO:0000305"/>
    <property type="project" value="UniProtKB"/>
</dbReference>
<dbReference type="GO" id="GO:0008380">
    <property type="term" value="P:RNA splicing"/>
    <property type="evidence" value="ECO:0000318"/>
    <property type="project" value="GO_Central"/>
</dbReference>
<dbReference type="GO" id="GO:0000375">
    <property type="term" value="P:RNA splicing, via transesterification reactions"/>
    <property type="evidence" value="ECO:0000314"/>
    <property type="project" value="HGNC-UCL"/>
</dbReference>
<dbReference type="InterPro" id="IPR021715">
    <property type="entry name" value="Slu7_dom"/>
</dbReference>
<dbReference type="InterPro" id="IPR039974">
    <property type="entry name" value="Splicing_factor_SLU7"/>
</dbReference>
<dbReference type="PANTHER" id="PTHR12942:SF2">
    <property type="entry name" value="PRE-MRNA-SPLICING FACTOR SLU7"/>
    <property type="match status" value="1"/>
</dbReference>
<dbReference type="PANTHER" id="PTHR12942">
    <property type="entry name" value="STEP II SPLICING FACTOR SLU7"/>
    <property type="match status" value="1"/>
</dbReference>
<dbReference type="Pfam" id="PF11708">
    <property type="entry name" value="Slu7"/>
    <property type="match status" value="1"/>
</dbReference>
<sequence>MSATVVDAVNAAPLSGSKEMSLEEPKKMTREDWRKKKELEEQRKLGNAPAEVDEEGKDINPHIPQYISSVPWYIDPSKRPTLKHQRPQPEKQKQFSSSGEWYKRGVKENSIITKYRKGACENCGAMTHKKKDCFERPRRVGAKFTGTNIAPDEHVQPQLMFDYDGKRDRWNGYNPEEHMKIVEEYAKVDLAKRTLKAQKLQEELASGKLVEQANSPKHQWGEEEPNSQMEKDHNSEDEDEDKYADDIDMPGQNFDSKRRITVRNLRIREDIAKYLRNLDPNSAYYDPKTRAMRENPYANAGKNPDEVSYAGDNFVRYTGDTISMAQTQLFAWEAYDKGSEVHLQADPTKLELLYKSFKVKKEDFKEQQKESILEKYGGQEHLDAPPAELLLAQTEDYVEYSRHGTVIKGQERAVACSKYEEDVKIHNHTHIWGSYWKEGRWGYKCCHSFFKYSYCTGEAGKEIVNSEECIINEITGEESVKKPQTLMELHQEKLKEEKKKKKKKKKKHRKSSSDSDDEEKKHEKLKKALNAEEARLLHVKETMQIDERKRPYNSMYETREPTEEEMEAYRMKRQRPDDPMASFLGQ</sequence>
<proteinExistence type="evidence at protein level"/>
<reference key="1">
    <citation type="journal article" date="1999" name="Genes Dev.">
        <title>Human step II splicing factor hSlu7 functions in restructuring the spliceosome between the catalytic steps of splicing.</title>
        <authorList>
            <person name="Chua K."/>
            <person name="Reed R."/>
        </authorList>
    </citation>
    <scope>NUCLEOTIDE SEQUENCE [MRNA]</scope>
    <scope>FUNCTION</scope>
    <scope>SUBCELLULAR LOCATION</scope>
    <scope>INTERACTION WITH LATE SPLICEOSOMAL COMPLEX</scope>
    <scope>VARIANT THR-229</scope>
</reference>
<reference key="2">
    <citation type="journal article" date="2004" name="Nature">
        <title>The DNA sequence and comparative analysis of human chromosome 5.</title>
        <authorList>
            <person name="Schmutz J."/>
            <person name="Martin J."/>
            <person name="Terry A."/>
            <person name="Couronne O."/>
            <person name="Grimwood J."/>
            <person name="Lowry S."/>
            <person name="Gordon L.A."/>
            <person name="Scott D."/>
            <person name="Xie G."/>
            <person name="Huang W."/>
            <person name="Hellsten U."/>
            <person name="Tran-Gyamfi M."/>
            <person name="She X."/>
            <person name="Prabhakar S."/>
            <person name="Aerts A."/>
            <person name="Altherr M."/>
            <person name="Bajorek E."/>
            <person name="Black S."/>
            <person name="Branscomb E."/>
            <person name="Caoile C."/>
            <person name="Challacombe J.F."/>
            <person name="Chan Y.M."/>
            <person name="Denys M."/>
            <person name="Detter J.C."/>
            <person name="Escobar J."/>
            <person name="Flowers D."/>
            <person name="Fotopulos D."/>
            <person name="Glavina T."/>
            <person name="Gomez M."/>
            <person name="Gonzales E."/>
            <person name="Goodstein D."/>
            <person name="Grigoriev I."/>
            <person name="Groza M."/>
            <person name="Hammon N."/>
            <person name="Hawkins T."/>
            <person name="Haydu L."/>
            <person name="Israni S."/>
            <person name="Jett J."/>
            <person name="Kadner K."/>
            <person name="Kimball H."/>
            <person name="Kobayashi A."/>
            <person name="Lopez F."/>
            <person name="Lou Y."/>
            <person name="Martinez D."/>
            <person name="Medina C."/>
            <person name="Morgan J."/>
            <person name="Nandkeshwar R."/>
            <person name="Noonan J.P."/>
            <person name="Pitluck S."/>
            <person name="Pollard M."/>
            <person name="Predki P."/>
            <person name="Priest J."/>
            <person name="Ramirez L."/>
            <person name="Retterer J."/>
            <person name="Rodriguez A."/>
            <person name="Rogers S."/>
            <person name="Salamov A."/>
            <person name="Salazar A."/>
            <person name="Thayer N."/>
            <person name="Tice H."/>
            <person name="Tsai M."/>
            <person name="Ustaszewska A."/>
            <person name="Vo N."/>
            <person name="Wheeler J."/>
            <person name="Wu K."/>
            <person name="Yang J."/>
            <person name="Dickson M."/>
            <person name="Cheng J.-F."/>
            <person name="Eichler E.E."/>
            <person name="Olsen A."/>
            <person name="Pennacchio L.A."/>
            <person name="Rokhsar D.S."/>
            <person name="Richardson P."/>
            <person name="Lucas S.M."/>
            <person name="Myers R.M."/>
            <person name="Rubin E.M."/>
        </authorList>
    </citation>
    <scope>NUCLEOTIDE SEQUENCE [LARGE SCALE GENOMIC DNA]</scope>
</reference>
<reference key="3">
    <citation type="submission" date="2005-09" db="EMBL/GenBank/DDBJ databases">
        <authorList>
            <person name="Mural R.J."/>
            <person name="Istrail S."/>
            <person name="Sutton G.G."/>
            <person name="Florea L."/>
            <person name="Halpern A.L."/>
            <person name="Mobarry C.M."/>
            <person name="Lippert R."/>
            <person name="Walenz B."/>
            <person name="Shatkay H."/>
            <person name="Dew I."/>
            <person name="Miller J.R."/>
            <person name="Flanigan M.J."/>
            <person name="Edwards N.J."/>
            <person name="Bolanos R."/>
            <person name="Fasulo D."/>
            <person name="Halldorsson B.V."/>
            <person name="Hannenhalli S."/>
            <person name="Turner R."/>
            <person name="Yooseph S."/>
            <person name="Lu F."/>
            <person name="Nusskern D.R."/>
            <person name="Shue B.C."/>
            <person name="Zheng X.H."/>
            <person name="Zhong F."/>
            <person name="Delcher A.L."/>
            <person name="Huson D.H."/>
            <person name="Kravitz S.A."/>
            <person name="Mouchard L."/>
            <person name="Reinert K."/>
            <person name="Remington K.A."/>
            <person name="Clark A.G."/>
            <person name="Waterman M.S."/>
            <person name="Eichler E.E."/>
            <person name="Adams M.D."/>
            <person name="Hunkapiller M.W."/>
            <person name="Myers E.W."/>
            <person name="Venter J.C."/>
        </authorList>
    </citation>
    <scope>NUCLEOTIDE SEQUENCE [LARGE SCALE GENOMIC DNA]</scope>
    <scope>VARIANT THR-229</scope>
</reference>
<reference key="4">
    <citation type="journal article" date="2004" name="Genome Res.">
        <title>The status, quality, and expansion of the NIH full-length cDNA project: the Mammalian Gene Collection (MGC).</title>
        <authorList>
            <consortium name="The MGC Project Team"/>
        </authorList>
    </citation>
    <scope>NUCLEOTIDE SEQUENCE [LARGE SCALE MRNA]</scope>
    <scope>VARIANTS VAL-111 AND THR-229</scope>
    <source>
        <tissue>Eye</tissue>
    </source>
</reference>
<reference key="5">
    <citation type="submission" date="2005-08" db="EMBL/GenBank/DDBJ databases">
        <authorList>
            <person name="Holste D."/>
            <person name="Shomron N."/>
            <person name="Burge C.B."/>
        </authorList>
    </citation>
    <scope>NUCLEOTIDE SEQUENCE [MRNA] OF 1-102</scope>
    <source>
        <tissue>Colon</tissue>
    </source>
</reference>
<reference key="6">
    <citation type="journal article" date="1999" name="Nature">
        <title>The RNA splicing factor hSlu7 is required for correct 3' splice-site choice.</title>
        <authorList>
            <person name="Chua K."/>
            <person name="Reed R."/>
        </authorList>
    </citation>
    <scope>FUNCTION</scope>
</reference>
<reference key="7">
    <citation type="journal article" date="2003" name="Science">
        <title>The birth of an alternatively spliced exon: 3' splice-site selection in Alu exons.</title>
        <authorList>
            <person name="Lev-Maor G."/>
            <person name="Sorek R."/>
            <person name="Shomron N."/>
            <person name="Ast G."/>
        </authorList>
    </citation>
    <scope>FUNCTION</scope>
</reference>
<reference key="8">
    <citation type="journal article" date="2004" name="Mol. Biol. Cell">
        <title>Splicing factor hSlu7 contains a unique functional domain required to retain the protein within the nucleus.</title>
        <authorList>
            <person name="Shomron N."/>
            <person name="Reznik M."/>
            <person name="Ast G."/>
        </authorList>
    </citation>
    <scope>FUNCTION</scope>
    <scope>SUBCELLULAR LOCATION</scope>
    <scope>DOMAIN CCHC-TYPE ZINC-FINGER</scope>
    <scope>ZINC-BINDING</scope>
    <scope>MUTAGENESIS OF ARG-116; LYS-117; CYS-120; CYS-123; 125-ALA-MET-126; HIS-128; LYS-129; CYS-133 AND LYS-166</scope>
</reference>
<reference key="9">
    <citation type="journal article" date="2005" name="J. Cell Sci.">
        <title>Stress alters the subcellular distribution of hSlu7 and thus modulates alternative splicing.</title>
        <authorList>
            <person name="Shomron N."/>
            <person name="Alberstein M."/>
            <person name="Reznik M."/>
            <person name="Ast G."/>
        </authorList>
    </citation>
    <scope>FUNCTION</scope>
    <scope>SUBCELLULAR LOCATION</scope>
</reference>
<reference key="10">
    <citation type="journal article" date="2005" name="J. Cell Sci.">
        <authorList>
            <person name="Shomron N."/>
            <person name="Alberstein M."/>
            <person name="Reznik M."/>
            <person name="Ast G."/>
        </authorList>
    </citation>
    <scope>ERRATUM OF PUBMED:15728250</scope>
</reference>
<reference key="11">
    <citation type="journal article" date="2006" name="Cell">
        <title>Global, in vivo, and site-specific phosphorylation dynamics in signaling networks.</title>
        <authorList>
            <person name="Olsen J.V."/>
            <person name="Blagoev B."/>
            <person name="Gnad F."/>
            <person name="Macek B."/>
            <person name="Kumar C."/>
            <person name="Mortensen P."/>
            <person name="Mann M."/>
        </authorList>
    </citation>
    <scope>PHOSPHORYLATION [LARGE SCALE ANALYSIS] AT SER-215</scope>
    <scope>VARIANT [LARGE SCALE ANALYSIS] THR-229</scope>
    <scope>IDENTIFICATION BY MASS SPECTROMETRY [LARGE SCALE ANALYSIS]</scope>
    <source>
        <tissue>Cervix carcinoma</tissue>
    </source>
</reference>
<reference key="12">
    <citation type="journal article" date="2006" name="Nat. Biotechnol.">
        <title>A probability-based approach for high-throughput protein phosphorylation analysis and site localization.</title>
        <authorList>
            <person name="Beausoleil S.A."/>
            <person name="Villen J."/>
            <person name="Gerber S.A."/>
            <person name="Rush J."/>
            <person name="Gygi S.P."/>
        </authorList>
    </citation>
    <scope>PHOSPHORYLATION [LARGE SCALE ANALYSIS] AT SER-215</scope>
    <scope>IDENTIFICATION BY MASS SPECTROMETRY [LARGE SCALE ANALYSIS]</scope>
    <source>
        <tissue>Cervix carcinoma</tissue>
    </source>
</reference>
<reference key="13">
    <citation type="journal article" date="2008" name="Mol. Cell">
        <title>Kinase-selective enrichment enables quantitative phosphoproteomics of the kinome across the cell cycle.</title>
        <authorList>
            <person name="Daub H."/>
            <person name="Olsen J.V."/>
            <person name="Bairlein M."/>
            <person name="Gnad F."/>
            <person name="Oppermann F.S."/>
            <person name="Korner R."/>
            <person name="Greff Z."/>
            <person name="Keri G."/>
            <person name="Stemmann O."/>
            <person name="Mann M."/>
        </authorList>
    </citation>
    <scope>PHOSPHORYLATION [LARGE SCALE ANALYSIS] AT SER-215</scope>
    <scope>IDENTIFICATION BY MASS SPECTROMETRY [LARGE SCALE ANALYSIS]</scope>
    <source>
        <tissue>Cervix carcinoma</tissue>
    </source>
</reference>
<reference key="14">
    <citation type="journal article" date="2009" name="Anal. Chem.">
        <title>Lys-N and trypsin cover complementary parts of the phosphoproteome in a refined SCX-based approach.</title>
        <authorList>
            <person name="Gauci S."/>
            <person name="Helbig A.O."/>
            <person name="Slijper M."/>
            <person name="Krijgsveld J."/>
            <person name="Heck A.J."/>
            <person name="Mohammed S."/>
        </authorList>
    </citation>
    <scope>ACETYLATION [LARGE SCALE ANALYSIS] AT SER-2</scope>
    <scope>CLEAVAGE OF INITIATOR METHIONINE [LARGE SCALE ANALYSIS]</scope>
    <scope>IDENTIFICATION BY MASS SPECTROMETRY [LARGE SCALE ANALYSIS]</scope>
</reference>
<reference key="15">
    <citation type="journal article" date="2010" name="Sci. Signal.">
        <title>Quantitative phosphoproteomics reveals widespread full phosphorylation site occupancy during mitosis.</title>
        <authorList>
            <person name="Olsen J.V."/>
            <person name="Vermeulen M."/>
            <person name="Santamaria A."/>
            <person name="Kumar C."/>
            <person name="Miller M.L."/>
            <person name="Jensen L.J."/>
            <person name="Gnad F."/>
            <person name="Cox J."/>
            <person name="Jensen T.S."/>
            <person name="Nigg E.A."/>
            <person name="Brunak S."/>
            <person name="Mann M."/>
        </authorList>
    </citation>
    <scope>PHOSPHORYLATION [LARGE SCALE ANALYSIS] AT SER-215; SER-227 AND SER-235</scope>
    <scope>VARIANT [LARGE SCALE ANALYSIS] THR-229</scope>
    <scope>IDENTIFICATION BY MASS SPECTROMETRY [LARGE SCALE ANALYSIS]</scope>
    <source>
        <tissue>Cervix carcinoma</tissue>
    </source>
</reference>
<reference key="16">
    <citation type="journal article" date="2011" name="Biochim. Biophys. Acta">
        <title>Stress induced subcellular distribution of ALG-2, RBM22 and hSlu7.</title>
        <authorList>
            <person name="Janowicz A."/>
            <person name="Michalak M."/>
            <person name="Krebs J."/>
        </authorList>
    </citation>
    <scope>SUBCELLULAR LOCATION</scope>
</reference>
<reference key="17">
    <citation type="journal article" date="2011" name="Sci. Signal.">
        <title>System-wide temporal characterization of the proteome and phosphoproteome of human embryonic stem cell differentiation.</title>
        <authorList>
            <person name="Rigbolt K.T."/>
            <person name="Prokhorova T.A."/>
            <person name="Akimov V."/>
            <person name="Henningsen J."/>
            <person name="Johansen P.T."/>
            <person name="Kratchmarova I."/>
            <person name="Kassem M."/>
            <person name="Mann M."/>
            <person name="Olsen J.V."/>
            <person name="Blagoev B."/>
        </authorList>
    </citation>
    <scope>PHOSPHORYLATION [LARGE SCALE ANALYSIS] AT SER-215 AND SER-235</scope>
    <scope>IDENTIFICATION BY MASS SPECTROMETRY [LARGE SCALE ANALYSIS]</scope>
</reference>
<reference key="18">
    <citation type="journal article" date="2013" name="J. Proteome Res.">
        <title>Toward a comprehensive characterization of a human cancer cell phosphoproteome.</title>
        <authorList>
            <person name="Zhou H."/>
            <person name="Di Palma S."/>
            <person name="Preisinger C."/>
            <person name="Peng M."/>
            <person name="Polat A.N."/>
            <person name="Heck A.J."/>
            <person name="Mohammed S."/>
        </authorList>
    </citation>
    <scope>PHOSPHORYLATION [LARGE SCALE ANALYSIS] AT SER-215; SER-227 AND SER-235</scope>
    <scope>VARIANT [LARGE SCALE ANALYSIS] THR-229</scope>
    <scope>IDENTIFICATION BY MASS SPECTROMETRY [LARGE SCALE ANALYSIS]</scope>
    <source>
        <tissue>Cervix carcinoma</tissue>
        <tissue>Erythroleukemia</tissue>
    </source>
</reference>
<reference key="19">
    <citation type="journal article" date="2014" name="J. Proteomics">
        <title>An enzyme assisted RP-RPLC approach for in-depth analysis of human liver phosphoproteome.</title>
        <authorList>
            <person name="Bian Y."/>
            <person name="Song C."/>
            <person name="Cheng K."/>
            <person name="Dong M."/>
            <person name="Wang F."/>
            <person name="Huang J."/>
            <person name="Sun D."/>
            <person name="Wang L."/>
            <person name="Ye M."/>
            <person name="Zou H."/>
        </authorList>
    </citation>
    <scope>PHOSPHORYLATION [LARGE SCALE ANALYSIS] AT SER-215 AND SER-235</scope>
    <scope>IDENTIFICATION BY MASS SPECTROMETRY [LARGE SCALE ANALYSIS]</scope>
    <source>
        <tissue>Liver</tissue>
    </source>
</reference>
<reference key="20">
    <citation type="journal article" date="2017" name="Nat. Struct. Mol. Biol.">
        <title>Site-specific mapping of the human SUMO proteome reveals co-modification with phosphorylation.</title>
        <authorList>
            <person name="Hendriks I.A."/>
            <person name="Lyon D."/>
            <person name="Young C."/>
            <person name="Jensen L.J."/>
            <person name="Vertegaal A.C."/>
            <person name="Nielsen M.L."/>
        </authorList>
    </citation>
    <scope>SUMOYLATION [LARGE SCALE ANALYSIS] AT LYS-349 AND LYS-408</scope>
    <scope>IDENTIFICATION BY MASS SPECTROMETRY [LARGE SCALE ANALYSIS]</scope>
</reference>
<reference evidence="12" key="21">
    <citation type="journal article" date="2017" name="Cell">
        <title>An Atomic Structure of the Human Spliceosome.</title>
        <authorList>
            <person name="Zhang X."/>
            <person name="Yan C."/>
            <person name="Hang J."/>
            <person name="Finci L.I."/>
            <person name="Lei J."/>
            <person name="Shi Y."/>
        </authorList>
    </citation>
    <scope>STRUCTURE BY ELECTRON MICROSCOPY (3.60 ANGSTROMS)</scope>
    <scope>FUNCTION</scope>
    <scope>SUBCELLULAR LOCATION</scope>
    <scope>SUBUNIT</scope>
</reference>
<reference evidence="13" key="22">
    <citation type="journal article" date="2019" name="Science">
        <title>A human postcatalytic spliceosome structure reveals essential roles of metazoan factors for exon ligation.</title>
        <authorList>
            <person name="Fica S.M."/>
            <person name="Oubridge C."/>
            <person name="Wilkinson M.E."/>
            <person name="Newman A.J."/>
            <person name="Nagai K."/>
        </authorList>
    </citation>
    <scope>STRUCTURE BY ELECTRON MICROSCOPY (3.30 ANGSTROMS)</scope>
    <scope>FUNCTION</scope>
    <scope>SUBCELLULAR LOCATION</scope>
    <scope>SUBUNIT</scope>
</reference>
<evidence type="ECO:0000256" key="1">
    <source>
        <dbReference type="SAM" id="MobiDB-lite"/>
    </source>
</evidence>
<evidence type="ECO:0000269" key="2">
    <source>
    </source>
</evidence>
<evidence type="ECO:0000269" key="3">
    <source>
    </source>
</evidence>
<evidence type="ECO:0000269" key="4">
    <source>
    </source>
</evidence>
<evidence type="ECO:0000269" key="5">
    <source>
    </source>
</evidence>
<evidence type="ECO:0000269" key="6">
    <source>
    </source>
</evidence>
<evidence type="ECO:0000269" key="7">
    <source>
    </source>
</evidence>
<evidence type="ECO:0000269" key="8">
    <source>
    </source>
</evidence>
<evidence type="ECO:0000269" key="9">
    <source>
    </source>
</evidence>
<evidence type="ECO:0000269" key="10">
    <source ref="3"/>
</evidence>
<evidence type="ECO:0000305" key="11"/>
<evidence type="ECO:0007744" key="12">
    <source>
        <dbReference type="PDB" id="5XJC"/>
    </source>
</evidence>
<evidence type="ECO:0007744" key="13">
    <source>
        <dbReference type="PDB" id="6QDV"/>
    </source>
</evidence>
<evidence type="ECO:0007744" key="14">
    <source>
    </source>
</evidence>
<evidence type="ECO:0007744" key="15">
    <source>
    </source>
</evidence>
<evidence type="ECO:0007744" key="16">
    <source>
    </source>
</evidence>
<evidence type="ECO:0007744" key="17">
    <source>
    </source>
</evidence>
<evidence type="ECO:0007744" key="18">
    <source>
    </source>
</evidence>
<evidence type="ECO:0007744" key="19">
    <source>
    </source>
</evidence>
<evidence type="ECO:0007744" key="20">
    <source>
    </source>
</evidence>
<evidence type="ECO:0007744" key="21">
    <source>
    </source>
</evidence>
<evidence type="ECO:0007744" key="22">
    <source>
    </source>
</evidence>
<evidence type="ECO:0007829" key="23">
    <source>
        <dbReference type="PDB" id="6ICZ"/>
    </source>
</evidence>
<comment type="function">
    <text evidence="2 3 4 5 7 8 9">Required for pre-mRNA splicing as component of the spliceosome (PubMed:10197984, PubMed:28502770, PubMed:30705154). Participates in the second catalytic step of pre-mRNA splicing, when the free hydroxyl group of exon I attacks the 3'-splice site to generate spliced mRNA and the excised lariat intron. Required for holding exon 1 properly in the spliceosome and for correct AG identification when more than one possible AG exists in 3'-splicing site region. May be involved in the activation of proximal AG. Probably also involved in alternative splicing regulation.</text>
</comment>
<comment type="subunit">
    <text evidence="2 8 9">Component of pre-catalytic, catalytic and post-catalytic spliceosomes (PubMed:10197984, PubMed:28502770, PubMed:30705154). Associates with the spliceosome prior to recognition of the 3'-splice site for step II, probably during catalysis of step I (PubMed:10197984).</text>
</comment>
<comment type="interaction">
    <interactant intactId="EBI-750559">
        <id>O95391</id>
    </interactant>
    <interactant intactId="EBI-745226">
        <id>Q13155</id>
        <label>AIMP2</label>
    </interactant>
    <organismsDiffer>false</organismsDiffer>
    <experiments>3</experiments>
</comment>
<comment type="interaction">
    <interactant intactId="EBI-750559">
        <id>O95391</id>
    </interactant>
    <interactant intactId="EBI-702390">
        <id>Q9UBB4</id>
        <label>ATXN10</label>
    </interactant>
    <organismsDiffer>false</organismsDiffer>
    <experiments>3</experiments>
</comment>
<comment type="interaction">
    <interactant intactId="EBI-750559">
        <id>O95391</id>
    </interactant>
    <interactant intactId="EBI-739624">
        <id>Q8NHQ1</id>
        <label>CEP70</label>
    </interactant>
    <organismsDiffer>false</organismsDiffer>
    <experiments>3</experiments>
</comment>
<comment type="interaction">
    <interactant intactId="EBI-750559">
        <id>O95391</id>
    </interactant>
    <interactant intactId="EBI-745369">
        <id>Q9H4E7</id>
        <label>DEF6</label>
    </interactant>
    <organismsDiffer>false</organismsDiffer>
    <experiments>3</experiments>
</comment>
<comment type="interaction">
    <interactant intactId="EBI-750559">
        <id>O95391</id>
    </interactant>
    <interactant intactId="EBI-741101">
        <id>Q13643</id>
        <label>FHL3</label>
    </interactant>
    <organismsDiffer>false</organismsDiffer>
    <experiments>3</experiments>
</comment>
<comment type="interaction">
    <interactant intactId="EBI-750559">
        <id>O95391</id>
    </interactant>
    <interactant intactId="EBI-744302">
        <id>P14136</id>
        <label>GFAP</label>
    </interactant>
    <organismsDiffer>false</organismsDiffer>
    <experiments>3</experiments>
</comment>
<comment type="interaction">
    <interactant intactId="EBI-750559">
        <id>O95391</id>
    </interactant>
    <interactant intactId="EBI-618309">
        <id>Q08379</id>
        <label>GOLGA2</label>
    </interactant>
    <organismsDiffer>false</organismsDiffer>
    <experiments>6</experiments>
</comment>
<comment type="interaction">
    <interactant intactId="EBI-750559">
        <id>O95391</id>
    </interactant>
    <interactant intactId="EBI-81279">
        <id>Q9Y6K9</id>
        <label>IKBKG</label>
    </interactant>
    <organismsDiffer>false</organismsDiffer>
    <experiments>3</experiments>
</comment>
<comment type="interaction">
    <interactant intactId="EBI-750559">
        <id>O95391</id>
    </interactant>
    <interactant intactId="EBI-1055254">
        <id>Q8WXH2</id>
        <label>JPH3</label>
    </interactant>
    <organismsDiffer>false</organismsDiffer>
    <experiments>3</experiments>
</comment>
<comment type="interaction">
    <interactant intactId="EBI-750559">
        <id>O95391</id>
    </interactant>
    <interactant intactId="EBI-10171697">
        <id>Q6A162</id>
        <label>KRT40</label>
    </interactant>
    <organismsDiffer>false</organismsDiffer>
    <experiments>3</experiments>
</comment>
<comment type="interaction">
    <interactant intactId="EBI-750559">
        <id>O95391</id>
    </interactant>
    <interactant intactId="EBI-2341787">
        <id>Q17RB8</id>
        <label>LONRF1</label>
    </interactant>
    <organismsDiffer>false</organismsDiffer>
    <experiments>3</experiments>
</comment>
<comment type="interaction">
    <interactant intactId="EBI-750559">
        <id>O95391</id>
    </interactant>
    <interactant intactId="EBI-741037">
        <id>Q9BRK4</id>
        <label>LZTS2</label>
    </interactant>
    <organismsDiffer>false</organismsDiffer>
    <experiments>3</experiments>
</comment>
<comment type="interaction">
    <interactant intactId="EBI-750559">
        <id>O95391</id>
    </interactant>
    <interactant intactId="EBI-307531">
        <id>P23508</id>
        <label>MCC</label>
    </interactant>
    <organismsDiffer>false</organismsDiffer>
    <experiments>3</experiments>
</comment>
<comment type="interaction">
    <interactant intactId="EBI-750559">
        <id>O95391</id>
    </interactant>
    <interactant intactId="EBI-713665">
        <id>P19404</id>
        <label>NDUFV2</label>
    </interactant>
    <organismsDiffer>false</organismsDiffer>
    <experiments>3</experiments>
</comment>
<comment type="interaction">
    <interactant intactId="EBI-750559">
        <id>O95391</id>
    </interactant>
    <interactant intactId="EBI-10271199">
        <id>Q8NI38</id>
        <label>NFKBID</label>
    </interactant>
    <organismsDiffer>false</organismsDiffer>
    <experiments>3</experiments>
</comment>
<comment type="interaction">
    <interactant intactId="EBI-750559">
        <id>O95391</id>
    </interactant>
    <interactant intactId="EBI-3390132">
        <id>Q9BZ95</id>
        <label>NSD3</label>
    </interactant>
    <organismsDiffer>false</organismsDiffer>
    <experiments>2</experiments>
</comment>
<comment type="interaction">
    <interactant intactId="EBI-750559">
        <id>O95391</id>
    </interactant>
    <interactant intactId="EBI-14066006">
        <id>Q4G0R1</id>
        <label>PIBF1</label>
    </interactant>
    <organismsDiffer>false</organismsDiffer>
    <experiments>3</experiments>
</comment>
<comment type="interaction">
    <interactant intactId="EBI-750559">
        <id>O95391</id>
    </interactant>
    <interactant intactId="EBI-751051">
        <id>Q9H2H8</id>
        <label>PPIL3</label>
    </interactant>
    <organismsDiffer>false</organismsDiffer>
    <experiments>7</experiments>
</comment>
<comment type="interaction">
    <interactant intactId="EBI-750559">
        <id>O95391</id>
    </interactant>
    <interactant intactId="EBI-744322">
        <id>O43395</id>
        <label>PRPF3</label>
    </interactant>
    <organismsDiffer>false</organismsDiffer>
    <experiments>2</experiments>
</comment>
<comment type="interaction">
    <interactant intactId="EBI-750559">
        <id>O95391</id>
    </interactant>
    <interactant intactId="EBI-538479">
        <id>Q6P2Q9</id>
        <label>PRPF8</label>
    </interactant>
    <organismsDiffer>false</organismsDiffer>
    <experiments>2</experiments>
</comment>
<comment type="interaction">
    <interactant intactId="EBI-750559">
        <id>O95391</id>
    </interactant>
    <interactant intactId="EBI-749111">
        <id>Q13435</id>
        <label>SF3B2</label>
    </interactant>
    <organismsDiffer>false</organismsDiffer>
    <experiments>2</experiments>
</comment>
<comment type="interaction">
    <interactant intactId="EBI-750559">
        <id>O95391</id>
    </interactant>
    <interactant intactId="EBI-11139477">
        <id>Q96N21</id>
        <label>TEPSIN</label>
    </interactant>
    <organismsDiffer>false</organismsDiffer>
    <experiments>3</experiments>
</comment>
<comment type="interaction">
    <interactant intactId="EBI-750559">
        <id>O95391</id>
    </interactant>
    <interactant intactId="EBI-741515">
        <id>Q9NVV9</id>
        <label>THAP1</label>
    </interactant>
    <organismsDiffer>false</organismsDiffer>
    <experiments>3</experiments>
</comment>
<comment type="subcellular location">
    <subcellularLocation>
        <location evidence="2 7 8 9">Nucleus</location>
    </subcellularLocation>
    <subcellularLocation>
        <location evidence="5">Nucleus speckle</location>
    </subcellularLocation>
    <subcellularLocation>
        <location evidence="7">Cytoplasm</location>
    </subcellularLocation>
    <text evidence="7">Predominantly nuclear. Shuttling between the nucleus and the cytoplasm is regulated by the CCHC-type zinc finger. Upon UV-C stress stimulus, the nuclear concentration of the protein decreases, affecting alternative splicing. Translocates from the nucleus to the cytoplasm after heat shock cell treatment. Accumulates in cytoplasmic vesicle-like organelles after heat shock treatment, which may represent stress granules.</text>
</comment>
<comment type="domain">
    <text evidence="5">The CCHC-type zinc finger is required to retain the protein within the nucleus and prevent its shuttle back to the cytoplasm via the CRM1 pathway.</text>
</comment>
<comment type="similarity">
    <text evidence="11">Belongs to the SLU7 family.</text>
</comment>
<protein>
    <recommendedName>
        <fullName>Pre-mRNA-splicing factor SLU7</fullName>
        <shortName>hSlu7</shortName>
    </recommendedName>
</protein>
<name>SLU7_HUMAN</name>
<feature type="initiator methionine" description="Removed" evidence="17">
    <location>
        <position position="1"/>
    </location>
</feature>
<feature type="chain" id="PRO_0000289194" description="Pre-mRNA-splicing factor SLU7">
    <location>
        <begin position="2"/>
        <end position="586"/>
    </location>
</feature>
<feature type="zinc finger region" description="CCHC-type">
    <location>
        <begin position="118"/>
        <end position="135"/>
    </location>
</feature>
<feature type="region of interest" description="Disordered" evidence="1">
    <location>
        <begin position="1"/>
        <end position="63"/>
    </location>
</feature>
<feature type="region of interest" description="Disordered" evidence="1">
    <location>
        <begin position="77"/>
        <end position="100"/>
    </location>
</feature>
<feature type="region of interest" description="Disordered" evidence="1">
    <location>
        <begin position="206"/>
        <end position="254"/>
    </location>
</feature>
<feature type="region of interest" description="Disordered" evidence="1">
    <location>
        <begin position="496"/>
        <end position="586"/>
    </location>
</feature>
<feature type="short sequence motif" description="Bipartite nuclear localization signal">
    <location>
        <begin position="129"/>
        <end position="169"/>
    </location>
</feature>
<feature type="compositionally biased region" description="Basic and acidic residues" evidence="1">
    <location>
        <begin position="20"/>
        <end position="44"/>
    </location>
</feature>
<feature type="compositionally biased region" description="Acidic residues" evidence="1">
    <location>
        <begin position="235"/>
        <end position="248"/>
    </location>
</feature>
<feature type="compositionally biased region" description="Basic residues" evidence="1">
    <location>
        <begin position="498"/>
        <end position="510"/>
    </location>
</feature>
<feature type="compositionally biased region" description="Basic and acidic residues" evidence="1">
    <location>
        <begin position="529"/>
        <end position="550"/>
    </location>
</feature>
<feature type="compositionally biased region" description="Basic and acidic residues" evidence="1">
    <location>
        <begin position="557"/>
        <end position="578"/>
    </location>
</feature>
<feature type="modified residue" description="N-acetylserine" evidence="17">
    <location>
        <position position="2"/>
    </location>
</feature>
<feature type="modified residue" description="Phosphoserine" evidence="14 15 16 18 19 20 21">
    <location>
        <position position="215"/>
    </location>
</feature>
<feature type="modified residue" description="Phosphoserine" evidence="18 20">
    <location>
        <position position="227"/>
    </location>
</feature>
<feature type="modified residue" description="Phosphoserine" evidence="18 19 20 21">
    <location>
        <position position="235"/>
    </location>
</feature>
<feature type="cross-link" description="Glycyl lysine isopeptide (Lys-Gly) (interchain with G-Cter in SUMO2)" evidence="22">
    <location>
        <position position="349"/>
    </location>
</feature>
<feature type="cross-link" description="Glycyl lysine isopeptide (Lys-Gly) (interchain with G-Cter in SUMO2)" evidence="22">
    <location>
        <position position="408"/>
    </location>
</feature>
<feature type="sequence variant" id="VAR_032598" description="In dbSNP:rs17856338." evidence="6">
    <original>I</original>
    <variation>V</variation>
    <location>
        <position position="111"/>
    </location>
</feature>
<feature type="sequence variant" id="VAR_032599" description="In dbSNP:rs2961944." evidence="2 6 10 15 18 20">
    <original>M</original>
    <variation>T</variation>
    <location>
        <position position="229"/>
    </location>
</feature>
<feature type="mutagenesis site" description="Abolishes nuclear localization." evidence="5">
    <original>R</original>
    <variation>N</variation>
    <location>
        <position position="116"/>
    </location>
</feature>
<feature type="mutagenesis site" description="Abolishes nuclear localization." evidence="5">
    <original>K</original>
    <variation>N</variation>
    <location>
        <position position="117"/>
    </location>
</feature>
<feature type="mutagenesis site" description="Induces a cytoplasmic localization; when associated with S-123; G-128 and S-133." evidence="5">
    <original>C</original>
    <variation>S</variation>
    <location>
        <position position="120"/>
    </location>
</feature>
<feature type="mutagenesis site" description="Induces a cytoplasmic localization; when associated with S-120; G-128 and S-133." evidence="5">
    <original>C</original>
    <variation>S</variation>
    <location>
        <position position="123"/>
    </location>
</feature>
<feature type="mutagenesis site" description="Does not affect nuclear localization." evidence="5">
    <original>AM</original>
    <variation>VP</variation>
    <location>
        <begin position="125"/>
        <end position="126"/>
    </location>
</feature>
<feature type="mutagenesis site" description="Induces a cytoplasmic localization; when associated with S-120; S-123 and S-133." evidence="5">
    <original>H</original>
    <variation>G</variation>
    <location>
        <position position="128"/>
    </location>
</feature>
<feature type="mutagenesis site" description="Abolishes nuclear localization." evidence="5">
    <original>K</original>
    <variation>N</variation>
    <location>
        <position position="129"/>
    </location>
</feature>
<feature type="mutagenesis site" description="Induces a cytoplasmic localization; when associated with S-120; S-123 and G-128." evidence="5">
    <original>C</original>
    <variation>S</variation>
    <location>
        <position position="133"/>
    </location>
</feature>
<feature type="mutagenesis site" description="Abolishes nuclear localization.">
    <original>R</original>
    <variation>N</variation>
    <location>
        <position position="136"/>
    </location>
</feature>
<feature type="mutagenesis site" description="Abolishes nuclear localization." evidence="5">
    <original>K</original>
    <variation>N</variation>
    <location>
        <position position="166"/>
    </location>
</feature>
<feature type="turn" evidence="23">
    <location>
        <begin position="65"/>
        <end position="67"/>
    </location>
</feature>
<feature type="turn" evidence="23">
    <location>
        <begin position="72"/>
        <end position="74"/>
    </location>
</feature>
<feature type="turn" evidence="23">
    <location>
        <begin position="82"/>
        <end position="85"/>
    </location>
</feature>
<feature type="turn" evidence="23">
    <location>
        <begin position="89"/>
        <end position="92"/>
    </location>
</feature>
<feature type="strand" evidence="23">
    <location>
        <begin position="117"/>
        <end position="119"/>
    </location>
</feature>
<feature type="strand" evidence="23">
    <location>
        <begin position="121"/>
        <end position="124"/>
    </location>
</feature>
<feature type="strand" evidence="23">
    <location>
        <begin position="126"/>
        <end position="128"/>
    </location>
</feature>
<feature type="turn" evidence="23">
    <location>
        <begin position="142"/>
        <end position="144"/>
    </location>
</feature>
<feature type="helix" evidence="23">
    <location>
        <begin position="163"/>
        <end position="166"/>
    </location>
</feature>
<feature type="turn" evidence="23">
    <location>
        <begin position="169"/>
        <end position="172"/>
    </location>
</feature>
<feature type="helix" evidence="23">
    <location>
        <begin position="175"/>
        <end position="177"/>
    </location>
</feature>
<feature type="helix" evidence="23">
    <location>
        <begin position="178"/>
        <end position="192"/>
    </location>
</feature>
<feature type="helix" evidence="23">
    <location>
        <begin position="273"/>
        <end position="275"/>
    </location>
</feature>
<feature type="turn" evidence="23">
    <location>
        <begin position="287"/>
        <end position="290"/>
    </location>
</feature>
<feature type="helix" evidence="23">
    <location>
        <begin position="313"/>
        <end position="316"/>
    </location>
</feature>
<feature type="strand" evidence="23">
    <location>
        <begin position="317"/>
        <end position="319"/>
    </location>
</feature>
<feature type="helix" evidence="23">
    <location>
        <begin position="320"/>
        <end position="337"/>
    </location>
</feature>
<feature type="turn" evidence="23">
    <location>
        <begin position="343"/>
        <end position="345"/>
    </location>
</feature>
<feature type="helix" evidence="23">
    <location>
        <begin position="347"/>
        <end position="368"/>
    </location>
</feature>
<keyword id="KW-0002">3D-structure</keyword>
<keyword id="KW-0007">Acetylation</keyword>
<keyword id="KW-0963">Cytoplasm</keyword>
<keyword id="KW-1017">Isopeptide bond</keyword>
<keyword id="KW-0479">Metal-binding</keyword>
<keyword id="KW-0507">mRNA processing</keyword>
<keyword id="KW-0508">mRNA splicing</keyword>
<keyword id="KW-0539">Nucleus</keyword>
<keyword id="KW-0597">Phosphoprotein</keyword>
<keyword id="KW-1267">Proteomics identification</keyword>
<keyword id="KW-1185">Reference proteome</keyword>
<keyword id="KW-0747">Spliceosome</keyword>
<keyword id="KW-0832">Ubl conjugation</keyword>
<keyword id="KW-0862">Zinc</keyword>
<keyword id="KW-0863">Zinc-finger</keyword>